<reference key="1">
    <citation type="journal article" date="1995" name="Nature">
        <title>MCM3 complex required for cell cycle regulation of DNA replication in vertebrate cells.</title>
        <authorList>
            <person name="Madine M.A."/>
            <person name="Khoo C.Y."/>
            <person name="Mills A.D."/>
            <person name="Laskey R.A."/>
        </authorList>
    </citation>
    <scope>NUCLEOTIDE SEQUENCE [MRNA]</scope>
    <scope>FUNCTION</scope>
    <scope>IDENTIFICATION IN A COMPLEX WITH MCM2 AND MCM5</scope>
    <scope>SUBCELLULAR LOCATION</scope>
    <source>
        <tissue>Egg</tissue>
    </source>
</reference>
<reference key="2">
    <citation type="submission" date="2005-12" db="EMBL/GenBank/DDBJ databases">
        <authorList>
            <consortium name="NIH - Xenopus Gene Collection (XGC) project"/>
        </authorList>
    </citation>
    <scope>NUCLEOTIDE SEQUENCE [LARGE SCALE MRNA]</scope>
    <source>
        <tissue>Oocyte</tissue>
    </source>
</reference>
<reference key="3">
    <citation type="journal article" date="1995" name="Cell">
        <title>Identification of the yeast MCM3-related protein as a component of Xenopus DNA replication licensing factor.</title>
        <authorList>
            <person name="Kubota Y."/>
            <person name="Mimura S."/>
            <person name="Nishimoto S."/>
            <person name="Takisawa H."/>
            <person name="Nojima H."/>
        </authorList>
    </citation>
    <scope>NUCLEOTIDE SEQUENCE [MRNA] OF 2-807</scope>
    <scope>FUNCTION</scope>
    <scope>SUBCELLULAR LOCATION</scope>
    <source>
        <tissue>Oocyte</tissue>
    </source>
</reference>
<reference key="4">
    <citation type="journal article" date="1995" name="Nature">
        <title>Purification of an MCM-containing complex as a component of the DNA replication licensing system.</title>
        <authorList>
            <person name="Chong J.P."/>
            <person name="Mahbubani H.M."/>
            <person name="Khoo C.Y."/>
            <person name="Blow J.J."/>
        </authorList>
    </citation>
    <scope>FUNCTION</scope>
    <scope>IDENTIFICATION IN RLF-M COMPLEX</scope>
    <scope>SUBCELLULAR LOCATION</scope>
</reference>
<reference key="5">
    <citation type="journal article" date="1996" name="Proc. Natl. Acad. Sci. U.S.A.">
        <title>XMCM7, a novel member of the Xenopus MCM family, interacts with XMCM3 and colocalizes with it throughout replication.</title>
        <authorList>
            <person name="Romanowski P."/>
            <person name="Madine M.A."/>
            <person name="Laskey R.A."/>
        </authorList>
    </citation>
    <scope>FUNCTION</scope>
    <scope>INTERACTION WITH MCM7</scope>
    <scope>IDENTIFICATION IN A COMPLEX WITH MCM2; MCM4; MCM5 AND MCM7</scope>
    <scope>SUBCELLULAR LOCATION</scope>
</reference>
<reference key="6">
    <citation type="journal article" date="1997" name="EMBO J.">
        <title>The RLF-M component of the replication licensing system forms complexes containing all six MCM/P1 polypeptides.</title>
        <authorList>
            <person name="Thommes P."/>
            <person name="Kubota Y."/>
            <person name="Takisawa H."/>
            <person name="Blow J.J."/>
        </authorList>
    </citation>
    <scope>FUNCTION</scope>
    <scope>IDENTIFICATION IN RLF-M COMPLEX</scope>
    <scope>SUBCELLULAR LOCATION</scope>
</reference>
<reference key="7">
    <citation type="journal article" date="1997" name="EMBO J.">
        <title>Licensing of DNA replication by a multi-protein complex of MCM/P1 proteins in Xenopus eggs.</title>
        <authorList>
            <person name="Kubota Y."/>
            <person name="Mimura S."/>
            <person name="Nishimoto S."/>
            <person name="Masuda T."/>
            <person name="Nojima H."/>
            <person name="Takisawa H."/>
        </authorList>
    </citation>
    <scope>FUNCTION</scope>
    <scope>IDENTIFICATION IN A COMPLEX WITH MCM2; MCM4; MCM5; MMCM6 AND MCM7</scope>
    <scope>SUBCELLULAR LOCATION</scope>
</reference>
<reference key="8">
    <citation type="journal article" date="1998" name="Curr. Biol.">
        <title>Developmental regulation of MCM replication factors in Xenopus laevis.</title>
        <authorList>
            <person name="Sible J.C."/>
            <person name="Erikson E."/>
            <person name="Hendrickson M."/>
            <person name="Maller J.L."/>
            <person name="Gautier J."/>
        </authorList>
    </citation>
    <scope>DEVELOPMENTAL STAGE</scope>
</reference>
<reference key="9">
    <citation type="journal article" date="1998" name="Exp. Cell Res.">
        <title>Evidence for different MCM subcomplexes with differential binding to chromatin in Xenopus.</title>
        <authorList>
            <person name="Coue M."/>
            <person name="Amariglio F."/>
            <person name="Maiorano D."/>
            <person name="Bocquet S."/>
            <person name="Mechali M."/>
        </authorList>
    </citation>
    <scope>IDENTIFICATION IN MCM COMPLEXES</scope>
</reference>
<reference key="10">
    <citation type="journal article" date="2005" name="EMBO J.">
        <title>The ATPase activity of MCM2-7 is dispensable for pre-RC assembly but is required for DNA unwinding.</title>
        <authorList>
            <person name="Ying C.Y."/>
            <person name="Gautier J."/>
        </authorList>
    </citation>
    <scope>FUNCTION</scope>
    <scope>IDENTIFICATION IN A COMPLEX WITH MCM2; MCM4; MCM5; MMCM6 AND MCM7</scope>
</reference>
<reference key="11">
    <citation type="journal article" date="2019" name="Life. Sci Alliance">
        <title>Mitotic replisome disassembly depends on TRAIP ubiquitin ligase activity.</title>
        <authorList>
            <person name="Priego Moreno S."/>
            <person name="Jones R.M."/>
            <person name="Poovathumkadavil D."/>
            <person name="Scaramuzza S."/>
            <person name="Gambus A."/>
        </authorList>
    </citation>
    <scope>IDENTIFICATION IN THE CMG HELICASE COMPLEX</scope>
</reference>
<reference key="12">
    <citation type="journal article" date="2019" name="Nature">
        <title>TRAIP is a master regulator of DNA interstrand crosslink repair.</title>
        <authorList>
            <person name="Wu R.A."/>
            <person name="Semlow D.R."/>
            <person name="Kamimae-Lanning A.N."/>
            <person name="Kochenova O.V."/>
            <person name="Chistol G."/>
            <person name="Hodskinson M.R."/>
            <person name="Amunugama R."/>
            <person name="Sparks J.L."/>
            <person name="Wang M."/>
            <person name="Deng L."/>
            <person name="Mimoso C.A."/>
            <person name="Low E."/>
            <person name="Patel K.J."/>
            <person name="Walter J.C."/>
        </authorList>
    </citation>
    <scope>IDENTIFICATION IN THE CMG HELICASE COMPLEX</scope>
</reference>
<protein>
    <recommendedName>
        <fullName>Maternal DNA replication licensing factor mcm3</fullName>
        <ecNumber>3.6.4.12</ecNumber>
    </recommendedName>
    <alternativeName>
        <fullName>Maternal minichromosome maintenance protein 3</fullName>
        <shortName>mMCM3</shortName>
        <shortName>xMCM3</shortName>
    </alternativeName>
    <alternativeName>
        <fullName>P1 homolog</fullName>
    </alternativeName>
    <alternativeName>
        <fullName>XRLF subunit beta</fullName>
    </alternativeName>
    <alternativeName>
        <fullName>p100</fullName>
    </alternativeName>
</protein>
<evidence type="ECO:0000255" key="1"/>
<evidence type="ECO:0000256" key="2">
    <source>
        <dbReference type="SAM" id="MobiDB-lite"/>
    </source>
</evidence>
<evidence type="ECO:0000269" key="3">
    <source>
    </source>
</evidence>
<evidence type="ECO:0000269" key="4">
    <source>
    </source>
</evidence>
<evidence type="ECO:0000269" key="5">
    <source>
    </source>
</evidence>
<evidence type="ECO:0000269" key="6">
    <source>
    </source>
</evidence>
<evidence type="ECO:0000269" key="7">
    <source>
    </source>
</evidence>
<evidence type="ECO:0000269" key="8">
    <source>
    </source>
</evidence>
<evidence type="ECO:0000269" key="9">
    <source>
    </source>
</evidence>
<evidence type="ECO:0000269" key="10">
    <source>
    </source>
</evidence>
<evidence type="ECO:0000269" key="11">
    <source>
    </source>
</evidence>
<evidence type="ECO:0000269" key="12">
    <source>
    </source>
</evidence>
<evidence type="ECO:0000269" key="13">
    <source>
    </source>
</evidence>
<evidence type="ECO:0000305" key="14"/>
<evidence type="ECO:0007829" key="15">
    <source>
        <dbReference type="PDB" id="8Q6O"/>
    </source>
</evidence>
<dbReference type="EC" id="3.6.4.12"/>
<dbReference type="EMBL" id="U26057">
    <property type="protein sequence ID" value="AAA80227.1"/>
    <property type="molecule type" value="mRNA"/>
</dbReference>
<dbReference type="EMBL" id="D38074">
    <property type="protein sequence ID" value="BAA07268.1"/>
    <property type="molecule type" value="mRNA"/>
</dbReference>
<dbReference type="EMBL" id="BC110950">
    <property type="protein sequence ID" value="AAI10951.1"/>
    <property type="molecule type" value="mRNA"/>
</dbReference>
<dbReference type="PIR" id="I51685">
    <property type="entry name" value="I51685"/>
</dbReference>
<dbReference type="PDB" id="8Q6O">
    <property type="method" value="EM"/>
    <property type="resolution" value="3.14 A"/>
    <property type="chains" value="3/B=1-807"/>
</dbReference>
<dbReference type="PDB" id="8Q6P">
    <property type="method" value="EM"/>
    <property type="resolution" value="3.53 A"/>
    <property type="chains" value="3=1-807"/>
</dbReference>
<dbReference type="PDBsum" id="8Q6O"/>
<dbReference type="PDBsum" id="8Q6P"/>
<dbReference type="EMDB" id="EMD-18191"/>
<dbReference type="EMDB" id="EMD-18192"/>
<dbReference type="EMDB" id="EMD-18195"/>
<dbReference type="SMR" id="P49739"/>
<dbReference type="BioGRID" id="99160">
    <property type="interactions" value="3"/>
</dbReference>
<dbReference type="ComplexPortal" id="CPX-2943">
    <property type="entry name" value="MCM complex"/>
</dbReference>
<dbReference type="IntAct" id="P49739">
    <property type="interactions" value="10"/>
</dbReference>
<dbReference type="MINT" id="P49739"/>
<dbReference type="DNASU" id="397821"/>
<dbReference type="KEGG" id="xla:397821"/>
<dbReference type="AGR" id="Xenbase:XB-GENE-5857895"/>
<dbReference type="CTD" id="397821"/>
<dbReference type="Xenbase" id="XB-GENE-5857895">
    <property type="gene designation" value="mcm3.L"/>
</dbReference>
<dbReference type="OMA" id="NVYPQED"/>
<dbReference type="OrthoDB" id="1882346at2759"/>
<dbReference type="Proteomes" id="UP000186698">
    <property type="component" value="Chromosome 6L"/>
</dbReference>
<dbReference type="Bgee" id="397821">
    <property type="expression patterns" value="Expressed in blastula and 5 other cell types or tissues"/>
</dbReference>
<dbReference type="GO" id="GO:0000785">
    <property type="term" value="C:chromatin"/>
    <property type="evidence" value="ECO:0000314"/>
    <property type="project" value="UniProtKB"/>
</dbReference>
<dbReference type="GO" id="GO:0071162">
    <property type="term" value="C:CMG complex"/>
    <property type="evidence" value="ECO:0000314"/>
    <property type="project" value="UniProtKB"/>
</dbReference>
<dbReference type="GO" id="GO:0042555">
    <property type="term" value="C:MCM complex"/>
    <property type="evidence" value="ECO:0000314"/>
    <property type="project" value="UniProtKB"/>
</dbReference>
<dbReference type="GO" id="GO:0005634">
    <property type="term" value="C:nucleus"/>
    <property type="evidence" value="ECO:0000318"/>
    <property type="project" value="GO_Central"/>
</dbReference>
<dbReference type="GO" id="GO:0005524">
    <property type="term" value="F:ATP binding"/>
    <property type="evidence" value="ECO:0007669"/>
    <property type="project" value="UniProtKB-KW"/>
</dbReference>
<dbReference type="GO" id="GO:0016887">
    <property type="term" value="F:ATP hydrolysis activity"/>
    <property type="evidence" value="ECO:0007669"/>
    <property type="project" value="InterPro"/>
</dbReference>
<dbReference type="GO" id="GO:0003697">
    <property type="term" value="F:single-stranded DNA binding"/>
    <property type="evidence" value="ECO:0000318"/>
    <property type="project" value="GO_Central"/>
</dbReference>
<dbReference type="GO" id="GO:0017116">
    <property type="term" value="F:single-stranded DNA helicase activity"/>
    <property type="evidence" value="ECO:0007669"/>
    <property type="project" value="TreeGrafter"/>
</dbReference>
<dbReference type="GO" id="GO:0044786">
    <property type="term" value="P:cell cycle DNA replication"/>
    <property type="evidence" value="ECO:0000314"/>
    <property type="project" value="UniProtKB"/>
</dbReference>
<dbReference type="GO" id="GO:0006271">
    <property type="term" value="P:DNA strand elongation involved in DNA replication"/>
    <property type="evidence" value="ECO:0000318"/>
    <property type="project" value="GO_Central"/>
</dbReference>
<dbReference type="GO" id="GO:0000727">
    <property type="term" value="P:double-strand break repair via break-induced replication"/>
    <property type="evidence" value="ECO:0000318"/>
    <property type="project" value="GO_Central"/>
</dbReference>
<dbReference type="GO" id="GO:1902975">
    <property type="term" value="P:mitotic DNA replication initiation"/>
    <property type="evidence" value="ECO:0000318"/>
    <property type="project" value="GO_Central"/>
</dbReference>
<dbReference type="GO" id="GO:0006279">
    <property type="term" value="P:premeiotic DNA replication"/>
    <property type="evidence" value="ECO:0000314"/>
    <property type="project" value="ComplexPortal"/>
</dbReference>
<dbReference type="GO" id="GO:0030174">
    <property type="term" value="P:regulation of DNA-templated DNA replication initiation"/>
    <property type="evidence" value="ECO:0000314"/>
    <property type="project" value="UniProtKB"/>
</dbReference>
<dbReference type="CDD" id="cd17754">
    <property type="entry name" value="MCM3"/>
    <property type="match status" value="1"/>
</dbReference>
<dbReference type="FunFam" id="2.20.28.10:FF:000006">
    <property type="entry name" value="DNA helicase"/>
    <property type="match status" value="1"/>
</dbReference>
<dbReference type="FunFam" id="3.30.1640.10:FF:000002">
    <property type="entry name" value="DNA helicase"/>
    <property type="match status" value="1"/>
</dbReference>
<dbReference type="Gene3D" id="2.20.28.10">
    <property type="match status" value="1"/>
</dbReference>
<dbReference type="Gene3D" id="3.30.1640.10">
    <property type="entry name" value="mini-chromosome maintenance (MCM) complex, chain A, domain 1"/>
    <property type="match status" value="1"/>
</dbReference>
<dbReference type="Gene3D" id="2.40.50.140">
    <property type="entry name" value="Nucleic acid-binding proteins"/>
    <property type="match status" value="1"/>
</dbReference>
<dbReference type="Gene3D" id="3.40.50.300">
    <property type="entry name" value="P-loop containing nucleotide triphosphate hydrolases"/>
    <property type="match status" value="1"/>
</dbReference>
<dbReference type="InterPro" id="IPR003593">
    <property type="entry name" value="AAA+_ATPase"/>
</dbReference>
<dbReference type="InterPro" id="IPR031327">
    <property type="entry name" value="MCM"/>
</dbReference>
<dbReference type="InterPro" id="IPR008046">
    <property type="entry name" value="Mcm3"/>
</dbReference>
<dbReference type="InterPro" id="IPR018525">
    <property type="entry name" value="MCM_CS"/>
</dbReference>
<dbReference type="InterPro" id="IPR001208">
    <property type="entry name" value="MCM_dom"/>
</dbReference>
<dbReference type="InterPro" id="IPR041562">
    <property type="entry name" value="MCM_lid"/>
</dbReference>
<dbReference type="InterPro" id="IPR027925">
    <property type="entry name" value="MCM_N"/>
</dbReference>
<dbReference type="InterPro" id="IPR033762">
    <property type="entry name" value="MCM_OB"/>
</dbReference>
<dbReference type="InterPro" id="IPR012340">
    <property type="entry name" value="NA-bd_OB-fold"/>
</dbReference>
<dbReference type="InterPro" id="IPR027417">
    <property type="entry name" value="P-loop_NTPase"/>
</dbReference>
<dbReference type="InterPro" id="IPR056575">
    <property type="entry name" value="WH_MCM3_C"/>
</dbReference>
<dbReference type="PANTHER" id="PTHR11630">
    <property type="entry name" value="DNA REPLICATION LICENSING FACTOR MCM FAMILY MEMBER"/>
    <property type="match status" value="1"/>
</dbReference>
<dbReference type="PANTHER" id="PTHR11630:SF71">
    <property type="entry name" value="DNA REPLICATION LICENSING FACTOR MCM3"/>
    <property type="match status" value="1"/>
</dbReference>
<dbReference type="Pfam" id="PF00493">
    <property type="entry name" value="MCM"/>
    <property type="match status" value="1"/>
</dbReference>
<dbReference type="Pfam" id="PF17855">
    <property type="entry name" value="MCM_lid"/>
    <property type="match status" value="1"/>
</dbReference>
<dbReference type="Pfam" id="PF14551">
    <property type="entry name" value="MCM_N"/>
    <property type="match status" value="1"/>
</dbReference>
<dbReference type="Pfam" id="PF17207">
    <property type="entry name" value="MCM_OB"/>
    <property type="match status" value="1"/>
</dbReference>
<dbReference type="Pfam" id="PF23191">
    <property type="entry name" value="WH_MCM3_C"/>
    <property type="match status" value="1"/>
</dbReference>
<dbReference type="PRINTS" id="PR01657">
    <property type="entry name" value="MCMFAMILY"/>
</dbReference>
<dbReference type="PRINTS" id="PR01659">
    <property type="entry name" value="MCMPROTEIN3"/>
</dbReference>
<dbReference type="SMART" id="SM00382">
    <property type="entry name" value="AAA"/>
    <property type="match status" value="1"/>
</dbReference>
<dbReference type="SMART" id="SM00350">
    <property type="entry name" value="MCM"/>
    <property type="match status" value="1"/>
</dbReference>
<dbReference type="SUPFAM" id="SSF50249">
    <property type="entry name" value="Nucleic acid-binding proteins"/>
    <property type="match status" value="1"/>
</dbReference>
<dbReference type="SUPFAM" id="SSF52540">
    <property type="entry name" value="P-loop containing nucleoside triphosphate hydrolases"/>
    <property type="match status" value="1"/>
</dbReference>
<dbReference type="PROSITE" id="PS00847">
    <property type="entry name" value="MCM_1"/>
    <property type="match status" value="1"/>
</dbReference>
<dbReference type="PROSITE" id="PS50051">
    <property type="entry name" value="MCM_2"/>
    <property type="match status" value="1"/>
</dbReference>
<name>MCM3M_XENLA</name>
<organism>
    <name type="scientific">Xenopus laevis</name>
    <name type="common">African clawed frog</name>
    <dbReference type="NCBI Taxonomy" id="8355"/>
    <lineage>
        <taxon>Eukaryota</taxon>
        <taxon>Metazoa</taxon>
        <taxon>Chordata</taxon>
        <taxon>Craniata</taxon>
        <taxon>Vertebrata</taxon>
        <taxon>Euteleostomi</taxon>
        <taxon>Amphibia</taxon>
        <taxon>Batrachia</taxon>
        <taxon>Anura</taxon>
        <taxon>Pipoidea</taxon>
        <taxon>Pipidae</taxon>
        <taxon>Xenopodinae</taxon>
        <taxon>Xenopus</taxon>
        <taxon>Xenopus</taxon>
    </lineage>
</organism>
<keyword id="KW-0002">3D-structure</keyword>
<keyword id="KW-0067">ATP-binding</keyword>
<keyword id="KW-0131">Cell cycle</keyword>
<keyword id="KW-0158">Chromosome</keyword>
<keyword id="KW-0235">DNA replication</keyword>
<keyword id="KW-0238">DNA-binding</keyword>
<keyword id="KW-0347">Helicase</keyword>
<keyword id="KW-0378">Hydrolase</keyword>
<keyword id="KW-0547">Nucleotide-binding</keyword>
<keyword id="KW-0539">Nucleus</keyword>
<keyword id="KW-1185">Reference proteome</keyword>
<proteinExistence type="evidence at protein level"/>
<comment type="function">
    <text evidence="3 6 7 8 9 10 11">Acts as a component of the mcm2-7 complex (mcm complex) which is the putative replicative helicase essential for 'once per cell cycle' DNA replication initiation and elongation in eukaryotic cells. The active ATPase sites in the mcm2-7 ring are formed through the interaction surfaces of two neighboring subunits such that a critical structure of a conserved arginine finger motif is provided in trans relative to the ATP-binding site of the Walker A box of the adjacent subunit. The six ATPase active sites, however, are likely to contribute differentially to the complex helicase activity. The existence of maternal and zygotic forms of mcm3 and mcm6 suggests that specific forms of mcm2-7 complexes may be used during different stages of development.</text>
</comment>
<comment type="catalytic activity">
    <reaction>
        <text>ATP + H2O = ADP + phosphate + H(+)</text>
        <dbReference type="Rhea" id="RHEA:13065"/>
        <dbReference type="ChEBI" id="CHEBI:15377"/>
        <dbReference type="ChEBI" id="CHEBI:15378"/>
        <dbReference type="ChEBI" id="CHEBI:30616"/>
        <dbReference type="ChEBI" id="CHEBI:43474"/>
        <dbReference type="ChEBI" id="CHEBI:456216"/>
        <dbReference type="EC" id="3.6.4.12"/>
    </reaction>
</comment>
<comment type="subunit">
    <text evidence="3 4 5 7 8 9 10 11 13">Component of the mcm2-7 complex (RLF-M) (PubMed:16369567, PubMed:7760937, PubMed:7760938, PubMed:8816774, PubMed:9214646, PubMed:9214647, PubMed:9851868). The complex forms a toroidal hexameric ring with the proposed subunit order mcm2-mcm6-mcm4-mcm7-mcm3-mcm5 (PubMed:16369567, PubMed:7760937, PubMed:7760938, PubMed:9214646, PubMed:9214647, PubMed:9851868). The heterodimer of mmcm3/mcm5 interacts with mcm4, mmcm6, mcm7 and weakly with mcm2 (PubMed:16369567, PubMed:7760937, PubMed:7760938, PubMed:9214646, PubMed:9214647, PubMed:9851868). Interacts with mcm7, though this interaction may not be direct, and remains in a complex with mcm7 throughout the cell cycle (PubMed:8816774). Component of the CMG helicase complex, composed of the mcm2-7 complex, the GINS complex and cdc45 (PubMed:30842657, PubMed:30979826).</text>
</comment>
<comment type="interaction">
    <interactant intactId="EBI-491720">
        <id>P49739</id>
    </interactant>
    <interactant intactId="EBI-876864">
        <id>P55861</id>
        <label>mcm2</label>
    </interactant>
    <organismsDiffer>false</organismsDiffer>
    <experiments>9</experiments>
</comment>
<comment type="interaction">
    <interactant intactId="EBI-491720">
        <id>P49739</id>
    </interactant>
    <interactant intactId="EBI-876879">
        <id>P55862</id>
        <label>mcm5-a</label>
    </interactant>
    <organismsDiffer>false</organismsDiffer>
    <experiments>5</experiments>
</comment>
<comment type="subcellular location">
    <subcellularLocation>
        <location evidence="6 7 8 9 10 11">Nucleus</location>
    </subcellularLocation>
    <subcellularLocation>
        <location evidence="10 11">Chromosome</location>
    </subcellularLocation>
    <text evidence="10 11">Associated with chromatin before the formation of nuclei and detaches from it as DNA replication progresses.</text>
</comment>
<comment type="developmental stage">
    <text evidence="12">Expressed maternally. Expression decreases suddenly at the gastrula stage.</text>
</comment>
<comment type="similarity">
    <text evidence="14">Belongs to the MCM family.</text>
</comment>
<accession>P49739</accession>
<accession>Q2NL58</accession>
<accession>Q91919</accession>
<gene>
    <name type="primary">mmcm3</name>
</gene>
<feature type="chain" id="PRO_0000194095" description="Maternal DNA replication licensing factor mcm3">
    <location>
        <begin position="1"/>
        <end position="807"/>
    </location>
</feature>
<feature type="domain" description="MCM">
    <location>
        <begin position="295"/>
        <end position="502"/>
    </location>
</feature>
<feature type="region of interest" description="Disordered" evidence="2">
    <location>
        <begin position="664"/>
        <end position="741"/>
    </location>
</feature>
<feature type="short sequence motif" description="Arginine finger">
    <location>
        <begin position="477"/>
        <end position="480"/>
    </location>
</feature>
<feature type="compositionally biased region" description="Basic and acidic residues" evidence="2">
    <location>
        <begin position="664"/>
        <end position="673"/>
    </location>
</feature>
<feature type="compositionally biased region" description="Polar residues" evidence="2">
    <location>
        <begin position="707"/>
        <end position="723"/>
    </location>
</feature>
<feature type="compositionally biased region" description="Basic and acidic residues" evidence="2">
    <location>
        <begin position="727"/>
        <end position="741"/>
    </location>
</feature>
<feature type="binding site" evidence="1">
    <location>
        <begin position="345"/>
        <end position="352"/>
    </location>
    <ligand>
        <name>ATP</name>
        <dbReference type="ChEBI" id="CHEBI:30616"/>
    </ligand>
</feature>
<feature type="sequence conflict" description="In Ref. 2; BAA07268." evidence="14" ref="2">
    <original>E</original>
    <variation>D</variation>
    <location>
        <position position="206"/>
    </location>
</feature>
<feature type="sequence conflict" description="In Ref. 1; AAA80227." evidence="14" ref="1">
    <original>D</original>
    <variation>G</variation>
    <location>
        <position position="606"/>
    </location>
</feature>
<feature type="sequence conflict" description="In Ref. 1; AAA80227." evidence="14" ref="1">
    <original>S</original>
    <variation>P</variation>
    <location>
        <position position="701"/>
    </location>
</feature>
<feature type="sequence conflict" description="In Ref. 2; BAA07268." evidence="14" ref="2">
    <original>D</original>
    <variation>G</variation>
    <location>
        <position position="794"/>
    </location>
</feature>
<feature type="helix" evidence="15">
    <location>
        <begin position="10"/>
        <end position="23"/>
    </location>
</feature>
<feature type="strand" evidence="15">
    <location>
        <begin position="26"/>
        <end position="28"/>
    </location>
</feature>
<feature type="helix" evidence="15">
    <location>
        <begin position="32"/>
        <end position="41"/>
    </location>
</feature>
<feature type="strand" evidence="15">
    <location>
        <begin position="46"/>
        <end position="50"/>
    </location>
</feature>
<feature type="helix" evidence="15">
    <location>
        <begin position="51"/>
        <end position="57"/>
    </location>
</feature>
<feature type="helix" evidence="15">
    <location>
        <begin position="59"/>
        <end position="67"/>
    </location>
</feature>
<feature type="helix" evidence="15">
    <location>
        <begin position="69"/>
        <end position="87"/>
    </location>
</feature>
<feature type="helix" evidence="15">
    <location>
        <begin position="89"/>
        <end position="94"/>
    </location>
</feature>
<feature type="strand" evidence="15">
    <location>
        <begin position="99"/>
        <end position="104"/>
    </location>
</feature>
<feature type="turn" evidence="15">
    <location>
        <begin position="113"/>
        <end position="115"/>
    </location>
</feature>
<feature type="helix" evidence="15">
    <location>
        <begin position="118"/>
        <end position="120"/>
    </location>
</feature>
<feature type="strand" evidence="15">
    <location>
        <begin position="123"/>
        <end position="134"/>
    </location>
</feature>
<feature type="strand" evidence="15">
    <location>
        <begin position="140"/>
        <end position="148"/>
    </location>
</feature>
<feature type="turn" evidence="15">
    <location>
        <begin position="149"/>
        <end position="152"/>
    </location>
</feature>
<feature type="strand" evidence="15">
    <location>
        <begin position="153"/>
        <end position="158"/>
    </location>
</feature>
<feature type="strand" evidence="15">
    <location>
        <begin position="164"/>
        <end position="166"/>
    </location>
</feature>
<feature type="helix" evidence="15">
    <location>
        <begin position="188"/>
        <end position="190"/>
    </location>
</feature>
<feature type="strand" evidence="15">
    <location>
        <begin position="191"/>
        <end position="194"/>
    </location>
</feature>
<feature type="strand" evidence="15">
    <location>
        <begin position="197"/>
        <end position="202"/>
    </location>
</feature>
<feature type="helix" evidence="15">
    <location>
        <begin position="205"/>
        <end position="207"/>
    </location>
</feature>
<feature type="strand" evidence="15">
    <location>
        <begin position="210"/>
        <end position="212"/>
    </location>
</feature>
<feature type="strand" evidence="15">
    <location>
        <begin position="216"/>
        <end position="221"/>
    </location>
</feature>
<feature type="helix" evidence="15">
    <location>
        <begin position="223"/>
        <end position="225"/>
    </location>
</feature>
<feature type="strand" evidence="15">
    <location>
        <begin position="234"/>
        <end position="244"/>
    </location>
</feature>
<feature type="strand" evidence="15">
    <location>
        <begin position="257"/>
        <end position="261"/>
    </location>
</feature>
<feature type="strand" evidence="15">
    <location>
        <begin position="263"/>
        <end position="268"/>
    </location>
</feature>
<sequence>MDYGGGFEDHELREAQREYLDFLDDDQDQGLYHGKVRDMIGSNEHRLIVNLNDVRRKNDKRANLMLNDAFAETIAFQRALKDLVASIDATYAKQFEEFSVGFEGSFGSKHVSPRTLTASLLGSLVCVEGIVTKCSLVRPKVMRSVHYCPATKKTLERKYSDLTSLEAFPSSSIYPTKDEENNPLETEYGLSTYKDHQTLSIQEMPEKAPAGQLPRSVDIIADDDLVDKCKPGDRVQIVGIYRCLPSKQGGFTSGTFRTILLANNIKLMSKEIAPTFSADDVAKIKKFCKAHSKDIFEHLSKSLAPSIHGHEYIKKAILCMLLGGNEKVLENGTRIRGDINVLLIGDPSVAKSQLLRYVLHTAPRAIPTTGRGSSGVGLTAAVTTDQETGERRLEAGAMVLADRGVVCIDEFDKMSDMDRTAIHEVMEQGRVTIAKAGIQARLNARCSVLAAANPVYGRYDQYRTPMENIGLQDSLLSRFDLLFIVLDKMDADNDQEIADHVLRMHRYRTPGEQDGYALPLGCSVEIFATDDPNASDVTDQELQIYEKHDNLLHGPRKNKSKIVSMQFIRKYIHVAKLIKPVLTSEAADYISQEYAKIRNHDQINNDSARTMPVTARALETMIRLSTAHAKVRMSKTIERQDAETALELVQFAYFKKVLAKEKKKTDKDLHDENLSQDTLSQESVRKSSRRAGKIADSQDDSMDPYSFSEQDSSLNENLSQSLRPQRKKAESQDGKRSLSQNRTKEFKAALLKAFKSSRSQSVAVSQLLELINKGNPEPFERSEVKEALDNMQNDNQVMVSEDVVFLI</sequence>